<feature type="chain" id="PRO_0000230816" description="3-hydroxyacyl-[acyl-carrier-protein] dehydratase FabZ">
    <location>
        <begin position="1"/>
        <end position="140"/>
    </location>
</feature>
<feature type="active site" evidence="1">
    <location>
        <position position="48"/>
    </location>
</feature>
<proteinExistence type="inferred from homology"/>
<comment type="function">
    <text evidence="1">Involved in unsaturated fatty acids biosynthesis. Catalyzes the dehydration of short chain beta-hydroxyacyl-ACPs and long chain saturated and unsaturated beta-hydroxyacyl-ACPs.</text>
</comment>
<comment type="catalytic activity">
    <reaction evidence="1">
        <text>a (3R)-hydroxyacyl-[ACP] = a (2E)-enoyl-[ACP] + H2O</text>
        <dbReference type="Rhea" id="RHEA:13097"/>
        <dbReference type="Rhea" id="RHEA-COMP:9925"/>
        <dbReference type="Rhea" id="RHEA-COMP:9945"/>
        <dbReference type="ChEBI" id="CHEBI:15377"/>
        <dbReference type="ChEBI" id="CHEBI:78784"/>
        <dbReference type="ChEBI" id="CHEBI:78827"/>
        <dbReference type="EC" id="4.2.1.59"/>
    </reaction>
</comment>
<comment type="subcellular location">
    <subcellularLocation>
        <location evidence="1">Cytoplasm</location>
    </subcellularLocation>
</comment>
<comment type="similarity">
    <text evidence="1">Belongs to the thioester dehydratase family. FabZ subfamily.</text>
</comment>
<reference key="1">
    <citation type="journal article" date="2005" name="Nat. Biotechnol.">
        <title>The complete genome sequence of the meat-borne lactic acid bacterium Lactobacillus sakei 23K.</title>
        <authorList>
            <person name="Chaillou S."/>
            <person name="Champomier-Verges M.-C."/>
            <person name="Cornet M."/>
            <person name="Crutz-Le Coq A.-M."/>
            <person name="Dudez A.-M."/>
            <person name="Martin V."/>
            <person name="Beaufils S."/>
            <person name="Darbon-Rongere E."/>
            <person name="Bossy R."/>
            <person name="Loux V."/>
            <person name="Zagorec M."/>
        </authorList>
    </citation>
    <scope>NUCLEOTIDE SEQUENCE [LARGE SCALE GENOMIC DNA]</scope>
    <source>
        <strain>23K</strain>
    </source>
</reference>
<organism>
    <name type="scientific">Latilactobacillus sakei subsp. sakei (strain 23K)</name>
    <name type="common">Lactobacillus sakei subsp. sakei</name>
    <dbReference type="NCBI Taxonomy" id="314315"/>
    <lineage>
        <taxon>Bacteria</taxon>
        <taxon>Bacillati</taxon>
        <taxon>Bacillota</taxon>
        <taxon>Bacilli</taxon>
        <taxon>Lactobacillales</taxon>
        <taxon>Lactobacillaceae</taxon>
        <taxon>Latilactobacillus</taxon>
    </lineage>
</organism>
<protein>
    <recommendedName>
        <fullName evidence="1">3-hydroxyacyl-[acyl-carrier-protein] dehydratase FabZ</fullName>
        <ecNumber evidence="1">4.2.1.59</ecNumber>
    </recommendedName>
    <alternativeName>
        <fullName evidence="1">(3R)-hydroxymyristoyl-[acyl-carrier-protein] dehydratase</fullName>
        <shortName evidence="1">(3R)-hydroxymyristoyl-ACP dehydrase</shortName>
    </alternativeName>
    <alternativeName>
        <fullName evidence="1">Beta-hydroxyacyl-ACP dehydratase</fullName>
    </alternativeName>
</protein>
<gene>
    <name evidence="1" type="primary">fabZ</name>
    <name type="ordered locus">LCA_0819</name>
</gene>
<name>FABZ_LATSS</name>
<keyword id="KW-0963">Cytoplasm</keyword>
<keyword id="KW-0441">Lipid A biosynthesis</keyword>
<keyword id="KW-0444">Lipid biosynthesis</keyword>
<keyword id="KW-0443">Lipid metabolism</keyword>
<keyword id="KW-0456">Lyase</keyword>
<keyword id="KW-1185">Reference proteome</keyword>
<sequence>MLDSQEIQAILPHRYPMLLIDRVLSFEPGEFAIARKNVSINEAVFQGHFPGNPVLPGVFILEAMAQTGAVALLTLDQFKGRTAFFGGVKSAKFRRVVRPGDTLEIKVTLEKLKDRIGVGKAIATVDGEKACTAELTFIIE</sequence>
<accession>Q38XF8</accession>
<dbReference type="EC" id="4.2.1.59" evidence="1"/>
<dbReference type="EMBL" id="CR936503">
    <property type="protein sequence ID" value="CAI55123.1"/>
    <property type="molecule type" value="Genomic_DNA"/>
</dbReference>
<dbReference type="RefSeq" id="WP_011374525.1">
    <property type="nucleotide sequence ID" value="NC_007576.1"/>
</dbReference>
<dbReference type="SMR" id="Q38XF8"/>
<dbReference type="STRING" id="314315.LCA_0819"/>
<dbReference type="GeneID" id="57133680"/>
<dbReference type="KEGG" id="lsa:LCA_0819"/>
<dbReference type="eggNOG" id="COG0764">
    <property type="taxonomic scope" value="Bacteria"/>
</dbReference>
<dbReference type="HOGENOM" id="CLU_078912_1_1_9"/>
<dbReference type="OrthoDB" id="9772788at2"/>
<dbReference type="Proteomes" id="UP000002707">
    <property type="component" value="Chromosome"/>
</dbReference>
<dbReference type="GO" id="GO:0005737">
    <property type="term" value="C:cytoplasm"/>
    <property type="evidence" value="ECO:0007669"/>
    <property type="project" value="UniProtKB-SubCell"/>
</dbReference>
<dbReference type="GO" id="GO:0016020">
    <property type="term" value="C:membrane"/>
    <property type="evidence" value="ECO:0007669"/>
    <property type="project" value="GOC"/>
</dbReference>
<dbReference type="GO" id="GO:0019171">
    <property type="term" value="F:(3R)-hydroxyacyl-[acyl-carrier-protein] dehydratase activity"/>
    <property type="evidence" value="ECO:0007669"/>
    <property type="project" value="UniProtKB-EC"/>
</dbReference>
<dbReference type="GO" id="GO:0006633">
    <property type="term" value="P:fatty acid biosynthetic process"/>
    <property type="evidence" value="ECO:0007669"/>
    <property type="project" value="UniProtKB-UniRule"/>
</dbReference>
<dbReference type="GO" id="GO:0009245">
    <property type="term" value="P:lipid A biosynthetic process"/>
    <property type="evidence" value="ECO:0007669"/>
    <property type="project" value="UniProtKB-UniRule"/>
</dbReference>
<dbReference type="CDD" id="cd01288">
    <property type="entry name" value="FabZ"/>
    <property type="match status" value="1"/>
</dbReference>
<dbReference type="FunFam" id="3.10.129.10:FF:000001">
    <property type="entry name" value="3-hydroxyacyl-[acyl-carrier-protein] dehydratase FabZ"/>
    <property type="match status" value="1"/>
</dbReference>
<dbReference type="Gene3D" id="3.10.129.10">
    <property type="entry name" value="Hotdog Thioesterase"/>
    <property type="match status" value="1"/>
</dbReference>
<dbReference type="HAMAP" id="MF_00406">
    <property type="entry name" value="FabZ"/>
    <property type="match status" value="1"/>
</dbReference>
<dbReference type="InterPro" id="IPR013114">
    <property type="entry name" value="FabA_FabZ"/>
</dbReference>
<dbReference type="InterPro" id="IPR010084">
    <property type="entry name" value="FabZ"/>
</dbReference>
<dbReference type="InterPro" id="IPR029069">
    <property type="entry name" value="HotDog_dom_sf"/>
</dbReference>
<dbReference type="NCBIfam" id="TIGR01750">
    <property type="entry name" value="fabZ"/>
    <property type="match status" value="1"/>
</dbReference>
<dbReference type="NCBIfam" id="NF000582">
    <property type="entry name" value="PRK00006.1"/>
    <property type="match status" value="1"/>
</dbReference>
<dbReference type="PANTHER" id="PTHR30272">
    <property type="entry name" value="3-HYDROXYACYL-[ACYL-CARRIER-PROTEIN] DEHYDRATASE"/>
    <property type="match status" value="1"/>
</dbReference>
<dbReference type="PANTHER" id="PTHR30272:SF1">
    <property type="entry name" value="3-HYDROXYACYL-[ACYL-CARRIER-PROTEIN] DEHYDRATASE"/>
    <property type="match status" value="1"/>
</dbReference>
<dbReference type="Pfam" id="PF07977">
    <property type="entry name" value="FabA"/>
    <property type="match status" value="1"/>
</dbReference>
<dbReference type="SUPFAM" id="SSF54637">
    <property type="entry name" value="Thioesterase/thiol ester dehydrase-isomerase"/>
    <property type="match status" value="1"/>
</dbReference>
<evidence type="ECO:0000255" key="1">
    <source>
        <dbReference type="HAMAP-Rule" id="MF_00406"/>
    </source>
</evidence>